<comment type="function">
    <text evidence="1">Rep helicase is a single-stranded DNA-dependent ATPase involved in DNA replication; it can initiate unwinding at a nick in the DNA. It binds to the single-stranded DNA and acts in a progressive fashion along the DNA in the 3' to 5' direction.</text>
</comment>
<comment type="catalytic activity">
    <reaction evidence="1">
        <text>Couples ATP hydrolysis with the unwinding of duplex DNA by translocating in the 3'-5' direction.</text>
        <dbReference type="EC" id="5.6.2.4"/>
    </reaction>
</comment>
<comment type="catalytic activity">
    <reaction evidence="1">
        <text>ATP + H2O = ADP + phosphate + H(+)</text>
        <dbReference type="Rhea" id="RHEA:13065"/>
        <dbReference type="ChEBI" id="CHEBI:15377"/>
        <dbReference type="ChEBI" id="CHEBI:15378"/>
        <dbReference type="ChEBI" id="CHEBI:30616"/>
        <dbReference type="ChEBI" id="CHEBI:43474"/>
        <dbReference type="ChEBI" id="CHEBI:456216"/>
        <dbReference type="EC" id="5.6.2.4"/>
    </reaction>
</comment>
<comment type="subunit">
    <text evidence="1">Homodimer.</text>
</comment>
<comment type="similarity">
    <text evidence="1">Belongs to the helicase family. UvrD subfamily.</text>
</comment>
<organism>
    <name type="scientific">Buchnera aphidicola subsp. Baizongia pistaciae (strain Bp)</name>
    <dbReference type="NCBI Taxonomy" id="224915"/>
    <lineage>
        <taxon>Bacteria</taxon>
        <taxon>Pseudomonadati</taxon>
        <taxon>Pseudomonadota</taxon>
        <taxon>Gammaproteobacteria</taxon>
        <taxon>Enterobacterales</taxon>
        <taxon>Erwiniaceae</taxon>
        <taxon>Buchnera</taxon>
    </lineage>
</organism>
<protein>
    <recommendedName>
        <fullName evidence="1">ATP-dependent DNA helicase Rep</fullName>
        <ecNumber evidence="1">5.6.2.4</ecNumber>
    </recommendedName>
    <alternativeName>
        <fullName evidence="1">DNA 3'-5' helicase Rep</fullName>
    </alternativeName>
</protein>
<gene>
    <name evidence="1" type="primary">rep</name>
    <name type="ordered locus">bbp_540</name>
</gene>
<accession>Q89A21</accession>
<keyword id="KW-0067">ATP-binding</keyword>
<keyword id="KW-0235">DNA replication</keyword>
<keyword id="KW-0238">DNA-binding</keyword>
<keyword id="KW-0347">Helicase</keyword>
<keyword id="KW-0378">Hydrolase</keyword>
<keyword id="KW-0413">Isomerase</keyword>
<keyword id="KW-0547">Nucleotide-binding</keyword>
<keyword id="KW-1185">Reference proteome</keyword>
<feature type="chain" id="PRO_0000102067" description="ATP-dependent DNA helicase Rep">
    <location>
        <begin position="1"/>
        <end position="670"/>
    </location>
</feature>
<feature type="domain" description="UvrD-like helicase ATP-binding" evidence="1">
    <location>
        <begin position="1"/>
        <end position="277"/>
    </location>
</feature>
<feature type="domain" description="UvrD-like helicase C-terminal" evidence="1">
    <location>
        <begin position="278"/>
        <end position="562"/>
    </location>
</feature>
<feature type="binding site" evidence="1">
    <location>
        <begin position="22"/>
        <end position="29"/>
    </location>
    <ligand>
        <name>ATP</name>
        <dbReference type="ChEBI" id="CHEBI:30616"/>
    </ligand>
</feature>
<feature type="binding site" evidence="1">
    <location>
        <position position="275"/>
    </location>
    <ligand>
        <name>ATP</name>
        <dbReference type="ChEBI" id="CHEBI:30616"/>
    </ligand>
</feature>
<proteinExistence type="inferred from homology"/>
<name>REP_BUCBP</name>
<evidence type="ECO:0000255" key="1">
    <source>
        <dbReference type="HAMAP-Rule" id="MF_01920"/>
    </source>
</evidence>
<reference key="1">
    <citation type="journal article" date="2003" name="Proc. Natl. Acad. Sci. U.S.A.">
        <title>Reductive genome evolution in Buchnera aphidicola.</title>
        <authorList>
            <person name="van Ham R.C.H.J."/>
            <person name="Kamerbeek J."/>
            <person name="Palacios C."/>
            <person name="Rausell C."/>
            <person name="Abascal F."/>
            <person name="Bastolla U."/>
            <person name="Fernandez J.M."/>
            <person name="Jimenez L."/>
            <person name="Postigo M."/>
            <person name="Silva F.J."/>
            <person name="Tamames J."/>
            <person name="Viguera E."/>
            <person name="Latorre A."/>
            <person name="Valencia A."/>
            <person name="Moran F."/>
            <person name="Moya A."/>
        </authorList>
    </citation>
    <scope>NUCLEOTIDE SEQUENCE [LARGE SCALE GENOMIC DNA]</scope>
    <source>
        <strain>Bp</strain>
    </source>
</reference>
<dbReference type="EC" id="5.6.2.4" evidence="1"/>
<dbReference type="EMBL" id="AE016826">
    <property type="protein sequence ID" value="AAO27239.1"/>
    <property type="molecule type" value="Genomic_DNA"/>
</dbReference>
<dbReference type="RefSeq" id="WP_011091640.1">
    <property type="nucleotide sequence ID" value="NC_004545.1"/>
</dbReference>
<dbReference type="SMR" id="Q89A21"/>
<dbReference type="STRING" id="224915.bbp_540"/>
<dbReference type="KEGG" id="bab:bbp_540"/>
<dbReference type="eggNOG" id="COG0210">
    <property type="taxonomic scope" value="Bacteria"/>
</dbReference>
<dbReference type="HOGENOM" id="CLU_004585_5_2_6"/>
<dbReference type="OrthoDB" id="9806690at2"/>
<dbReference type="Proteomes" id="UP000000601">
    <property type="component" value="Chromosome"/>
</dbReference>
<dbReference type="GO" id="GO:0005829">
    <property type="term" value="C:cytosol"/>
    <property type="evidence" value="ECO:0007669"/>
    <property type="project" value="TreeGrafter"/>
</dbReference>
<dbReference type="GO" id="GO:0043138">
    <property type="term" value="F:3'-5' DNA helicase activity"/>
    <property type="evidence" value="ECO:0007669"/>
    <property type="project" value="UniProtKB-UniRule"/>
</dbReference>
<dbReference type="GO" id="GO:0005524">
    <property type="term" value="F:ATP binding"/>
    <property type="evidence" value="ECO:0007669"/>
    <property type="project" value="UniProtKB-UniRule"/>
</dbReference>
<dbReference type="GO" id="GO:0016887">
    <property type="term" value="F:ATP hydrolysis activity"/>
    <property type="evidence" value="ECO:0007669"/>
    <property type="project" value="RHEA"/>
</dbReference>
<dbReference type="GO" id="GO:0003697">
    <property type="term" value="F:single-stranded DNA binding"/>
    <property type="evidence" value="ECO:0007669"/>
    <property type="project" value="UniProtKB-UniRule"/>
</dbReference>
<dbReference type="GO" id="GO:0006260">
    <property type="term" value="P:DNA replication"/>
    <property type="evidence" value="ECO:0007669"/>
    <property type="project" value="UniProtKB-KW"/>
</dbReference>
<dbReference type="GO" id="GO:0000725">
    <property type="term" value="P:recombinational repair"/>
    <property type="evidence" value="ECO:0007669"/>
    <property type="project" value="TreeGrafter"/>
</dbReference>
<dbReference type="CDD" id="cd17932">
    <property type="entry name" value="DEXQc_UvrD"/>
    <property type="match status" value="1"/>
</dbReference>
<dbReference type="CDD" id="cd18807">
    <property type="entry name" value="SF1_C_UvrD"/>
    <property type="match status" value="1"/>
</dbReference>
<dbReference type="Gene3D" id="1.10.10.160">
    <property type="match status" value="1"/>
</dbReference>
<dbReference type="Gene3D" id="3.40.50.300">
    <property type="entry name" value="P-loop containing nucleotide triphosphate hydrolases"/>
    <property type="match status" value="2"/>
</dbReference>
<dbReference type="Gene3D" id="1.10.486.10">
    <property type="entry name" value="PCRA, domain 4"/>
    <property type="match status" value="1"/>
</dbReference>
<dbReference type="HAMAP" id="MF_01920">
    <property type="entry name" value="Helicase_Rep"/>
    <property type="match status" value="1"/>
</dbReference>
<dbReference type="InterPro" id="IPR013986">
    <property type="entry name" value="DExx_box_DNA_helicase_dom_sf"/>
</dbReference>
<dbReference type="InterPro" id="IPR014017">
    <property type="entry name" value="DNA_helicase_UvrD-like_C"/>
</dbReference>
<dbReference type="InterPro" id="IPR000212">
    <property type="entry name" value="DNA_helicase_UvrD/REP"/>
</dbReference>
<dbReference type="InterPro" id="IPR005752">
    <property type="entry name" value="Helicase_Rep"/>
</dbReference>
<dbReference type="InterPro" id="IPR027417">
    <property type="entry name" value="P-loop_NTPase"/>
</dbReference>
<dbReference type="InterPro" id="IPR014016">
    <property type="entry name" value="UvrD-like_ATP-bd"/>
</dbReference>
<dbReference type="PANTHER" id="PTHR11070:SF64">
    <property type="entry name" value="ATP-DEPENDENT DNA HELICASE REP"/>
    <property type="match status" value="1"/>
</dbReference>
<dbReference type="PANTHER" id="PTHR11070">
    <property type="entry name" value="UVRD / RECB / PCRA DNA HELICASE FAMILY MEMBER"/>
    <property type="match status" value="1"/>
</dbReference>
<dbReference type="Pfam" id="PF00580">
    <property type="entry name" value="UvrD-helicase"/>
    <property type="match status" value="1"/>
</dbReference>
<dbReference type="Pfam" id="PF13361">
    <property type="entry name" value="UvrD_C"/>
    <property type="match status" value="1"/>
</dbReference>
<dbReference type="SUPFAM" id="SSF52540">
    <property type="entry name" value="P-loop containing nucleoside triphosphate hydrolases"/>
    <property type="match status" value="1"/>
</dbReference>
<dbReference type="PROSITE" id="PS51198">
    <property type="entry name" value="UVRD_HELICASE_ATP_BIND"/>
    <property type="match status" value="1"/>
</dbReference>
<dbReference type="PROSITE" id="PS51217">
    <property type="entry name" value="UVRD_HELICASE_CTER"/>
    <property type="match status" value="1"/>
</dbReference>
<sequence length="670" mass="78501">MLFNEHQKKAISYISGPCLILAGAGSGKTRVIINKIVHLIKICHFDPKCITAITFTNKAACEMKSRILNVLSVNVSNLVKISTFHALGLEIIKSEIELLNIKSNFTIFDEQDQISILQEIVSKEDRSFVRQIRQSISNWKNKLLCPNQVNKISNSSIEFKFFRYYELYNAYLKSSNILDFDDLIFLPTILLRDNKLSRERWNDKIKYLLVDEYQDTNFIQYKLIKLLSSKRSNFTLVGDDDQSIYSWRGANIHNFESLKHDYPNLRTIIMQHNYRSSGRILKVANALISNNLHFFNKKLFSNLDYGSIVEIISAKNEEDEARVILQTLMLHKSNYNAQYKDYAILYRSNYQVKIFEKFLIKFKIPYKILANISFFSRPEIKDLIAYLRLIINPDDNAAFLRVVNRPLRGIGAVTLQKLKEWSKKRNQSFFMASLDIGLESILPVHNLKSLQEFVYLIQTISYQIQLNPIEVLEKLVATIKYEKWLMRSLKFSKLYVASIKNISIVLNWIINELKYKIMNSKKFVMKYLIDIISEFILQNSLNEDIVINNDYVQLMTLHASKGLEFLYVFIVGVEEGVLPYYRNTTMENNIDEERRLAYVGITRAQKKLFLSYAIQRCQYGVVINTKPSRFLRELPQSDILWQKSKILNLNEKNNFLFKAYKKSLKKKLLR</sequence>